<comment type="function">
    <text evidence="1">Catalyzes the transfer of the enolpyruvyl moiety of phosphoenolpyruvate (PEP) to the 5-hydroxyl of shikimate-3-phosphate (S3P) to produce enolpyruvyl shikimate-3-phosphate and inorganic phosphate.</text>
</comment>
<comment type="catalytic activity">
    <reaction evidence="1">
        <text>3-phosphoshikimate + phosphoenolpyruvate = 5-O-(1-carboxyvinyl)-3-phosphoshikimate + phosphate</text>
        <dbReference type="Rhea" id="RHEA:21256"/>
        <dbReference type="ChEBI" id="CHEBI:43474"/>
        <dbReference type="ChEBI" id="CHEBI:57701"/>
        <dbReference type="ChEBI" id="CHEBI:58702"/>
        <dbReference type="ChEBI" id="CHEBI:145989"/>
        <dbReference type="EC" id="2.5.1.19"/>
    </reaction>
    <physiologicalReaction direction="left-to-right" evidence="1">
        <dbReference type="Rhea" id="RHEA:21257"/>
    </physiologicalReaction>
</comment>
<comment type="pathway">
    <text evidence="1">Metabolic intermediate biosynthesis; chorismate biosynthesis; chorismate from D-erythrose 4-phosphate and phosphoenolpyruvate: step 6/7.</text>
</comment>
<comment type="subunit">
    <text evidence="1">Monomer.</text>
</comment>
<comment type="subcellular location">
    <subcellularLocation>
        <location evidence="1">Cytoplasm</location>
    </subcellularLocation>
</comment>
<comment type="similarity">
    <text evidence="1 2">Belongs to the EPSP synthase family.</text>
</comment>
<organism>
    <name type="scientific">Staphylococcus aureus (strain NCTC 8325 / PS 47)</name>
    <dbReference type="NCBI Taxonomy" id="93061"/>
    <lineage>
        <taxon>Bacteria</taxon>
        <taxon>Bacillati</taxon>
        <taxon>Bacillota</taxon>
        <taxon>Bacilli</taxon>
        <taxon>Bacillales</taxon>
        <taxon>Staphylococcaceae</taxon>
        <taxon>Staphylococcus</taxon>
    </lineage>
</organism>
<accession>Q05615</accession>
<accession>Q2FYH1</accession>
<keyword id="KW-0028">Amino-acid biosynthesis</keyword>
<keyword id="KW-0057">Aromatic amino acid biosynthesis</keyword>
<keyword id="KW-0963">Cytoplasm</keyword>
<keyword id="KW-1185">Reference proteome</keyword>
<keyword id="KW-0808">Transferase</keyword>
<gene>
    <name evidence="1" type="primary">aroA</name>
    <name type="ordered locus">SAOUHSC_01481</name>
</gene>
<dbReference type="EC" id="2.5.1.19" evidence="1"/>
<dbReference type="EMBL" id="L05004">
    <property type="protein sequence ID" value="AAA71897.1"/>
    <property type="molecule type" value="Unassigned_DNA"/>
</dbReference>
<dbReference type="EMBL" id="CP000253">
    <property type="protein sequence ID" value="ABD30566.1"/>
    <property type="molecule type" value="Genomic_DNA"/>
</dbReference>
<dbReference type="RefSeq" id="WP_000245895.1">
    <property type="nucleotide sequence ID" value="NZ_LS483365.1"/>
</dbReference>
<dbReference type="RefSeq" id="YP_499999.1">
    <property type="nucleotide sequence ID" value="NC_007795.1"/>
</dbReference>
<dbReference type="SMR" id="Q05615"/>
<dbReference type="STRING" id="93061.SAOUHSC_01481"/>
<dbReference type="PaxDb" id="1280-SAXN108_1487"/>
<dbReference type="GeneID" id="3920236"/>
<dbReference type="KEGG" id="sao:SAOUHSC_01481"/>
<dbReference type="PATRIC" id="fig|93061.5.peg.1350"/>
<dbReference type="eggNOG" id="COG0128">
    <property type="taxonomic scope" value="Bacteria"/>
</dbReference>
<dbReference type="HOGENOM" id="CLU_024321_0_1_9"/>
<dbReference type="OrthoDB" id="9809920at2"/>
<dbReference type="UniPathway" id="UPA00053">
    <property type="reaction ID" value="UER00089"/>
</dbReference>
<dbReference type="PRO" id="PR:Q05615"/>
<dbReference type="Proteomes" id="UP000008816">
    <property type="component" value="Chromosome"/>
</dbReference>
<dbReference type="GO" id="GO:0005737">
    <property type="term" value="C:cytoplasm"/>
    <property type="evidence" value="ECO:0007669"/>
    <property type="project" value="UniProtKB-SubCell"/>
</dbReference>
<dbReference type="GO" id="GO:0003866">
    <property type="term" value="F:3-phosphoshikimate 1-carboxyvinyltransferase activity"/>
    <property type="evidence" value="ECO:0000318"/>
    <property type="project" value="GO_Central"/>
</dbReference>
<dbReference type="GO" id="GO:0008652">
    <property type="term" value="P:amino acid biosynthetic process"/>
    <property type="evidence" value="ECO:0007669"/>
    <property type="project" value="UniProtKB-KW"/>
</dbReference>
<dbReference type="GO" id="GO:0009073">
    <property type="term" value="P:aromatic amino acid family biosynthetic process"/>
    <property type="evidence" value="ECO:0007669"/>
    <property type="project" value="UniProtKB-KW"/>
</dbReference>
<dbReference type="GO" id="GO:0009423">
    <property type="term" value="P:chorismate biosynthetic process"/>
    <property type="evidence" value="ECO:0000318"/>
    <property type="project" value="GO_Central"/>
</dbReference>
<dbReference type="CDD" id="cd01556">
    <property type="entry name" value="EPSP_synthase"/>
    <property type="match status" value="1"/>
</dbReference>
<dbReference type="FunFam" id="3.65.10.10:FF:000005">
    <property type="entry name" value="3-phosphoshikimate 1-carboxyvinyltransferase"/>
    <property type="match status" value="1"/>
</dbReference>
<dbReference type="FunFam" id="3.65.10.10:FF:000006">
    <property type="entry name" value="3-phosphoshikimate 1-carboxyvinyltransferase"/>
    <property type="match status" value="1"/>
</dbReference>
<dbReference type="Gene3D" id="3.65.10.10">
    <property type="entry name" value="Enolpyruvate transferase domain"/>
    <property type="match status" value="2"/>
</dbReference>
<dbReference type="HAMAP" id="MF_00210">
    <property type="entry name" value="EPSP_synth"/>
    <property type="match status" value="1"/>
</dbReference>
<dbReference type="InterPro" id="IPR001986">
    <property type="entry name" value="Enolpyruvate_Tfrase_dom"/>
</dbReference>
<dbReference type="InterPro" id="IPR036968">
    <property type="entry name" value="Enolpyruvate_Tfrase_sf"/>
</dbReference>
<dbReference type="InterPro" id="IPR006264">
    <property type="entry name" value="EPSP_synthase"/>
</dbReference>
<dbReference type="InterPro" id="IPR023193">
    <property type="entry name" value="EPSP_synthase_CS"/>
</dbReference>
<dbReference type="InterPro" id="IPR013792">
    <property type="entry name" value="RNA3'P_cycl/enolpyr_Trfase_a/b"/>
</dbReference>
<dbReference type="NCBIfam" id="TIGR01356">
    <property type="entry name" value="aroA"/>
    <property type="match status" value="1"/>
</dbReference>
<dbReference type="PANTHER" id="PTHR21090">
    <property type="entry name" value="AROM/DEHYDROQUINATE SYNTHASE"/>
    <property type="match status" value="1"/>
</dbReference>
<dbReference type="PANTHER" id="PTHR21090:SF5">
    <property type="entry name" value="PENTAFUNCTIONAL AROM POLYPEPTIDE"/>
    <property type="match status" value="1"/>
</dbReference>
<dbReference type="Pfam" id="PF00275">
    <property type="entry name" value="EPSP_synthase"/>
    <property type="match status" value="1"/>
</dbReference>
<dbReference type="PIRSF" id="PIRSF000505">
    <property type="entry name" value="EPSPS"/>
    <property type="match status" value="1"/>
</dbReference>
<dbReference type="SUPFAM" id="SSF55205">
    <property type="entry name" value="EPT/RTPC-like"/>
    <property type="match status" value="1"/>
</dbReference>
<dbReference type="PROSITE" id="PS00104">
    <property type="entry name" value="EPSP_SYNTHASE_1"/>
    <property type="match status" value="1"/>
</dbReference>
<dbReference type="PROSITE" id="PS00885">
    <property type="entry name" value="EPSP_SYNTHASE_2"/>
    <property type="match status" value="1"/>
</dbReference>
<reference key="1">
    <citation type="journal article" date="1993" name="J. Gen. Microbiol.">
        <title>Sequence and mapping of the aroA gene of Staphylococcus aureus 8325-4.</title>
        <authorList>
            <person name="O'Connell C.M."/>
            <person name="Pattee P."/>
            <person name="Foster T.J."/>
        </authorList>
    </citation>
    <scope>NUCLEOTIDE SEQUENCE [GENOMIC DNA]</scope>
</reference>
<reference key="2">
    <citation type="book" date="2006" name="Gram positive pathogens, 2nd edition">
        <title>The Staphylococcus aureus NCTC 8325 genome.</title>
        <editorList>
            <person name="Fischetti V."/>
            <person name="Novick R."/>
            <person name="Ferretti J."/>
            <person name="Portnoy D."/>
            <person name="Rood J."/>
        </editorList>
        <authorList>
            <person name="Gillaspy A.F."/>
            <person name="Worrell V."/>
            <person name="Orvis J."/>
            <person name="Roe B.A."/>
            <person name="Dyer D.W."/>
            <person name="Iandolo J.J."/>
        </authorList>
    </citation>
    <scope>NUCLEOTIDE SEQUENCE [LARGE SCALE GENOMIC DNA]</scope>
    <source>
        <strain>NCTC 8325 / PS 47</strain>
    </source>
</reference>
<sequence length="432" mass="47003">MVNEQIIDISGPLKGEIEVPGDKSMTHRAIMLASLAEGVSTIYKPLLGEDCRRTMDIFRLLGVEIKEDDEKLVVTSPGYQSFNTPHQVLYTGNSGTTTRLLAGLLSGLGIESVLSGDVSIGKRPMDRVLRPLKLMDANIEGIEDNYTPLIIKPSVIKGINYQMEVASAQVKSAILFASLFSKEPTIIKELDVSRNHTETMFKHFNIPIEAEGLSINTTPEAIRYIKPADFHVPGDISSAAFFIVAALITPGSDVTIHNVGINPTRSGIIDIVEKMGGNIQLFNQTTGAEPTASIRIQYTPMLQPITIEGELVPKAIDELPVIALLCTQAVGTSTIKDAEELKVKETNRIDTTADMLNLLGFELQPTNDGLIIHPSEFKTNATVDSLTDHRIGMMLAVASLLSSEPVKIKQFDAVNVSFPGFLPKLKLLENEG</sequence>
<protein>
    <recommendedName>
        <fullName evidence="1">3-phosphoshikimate 1-carboxyvinyltransferase</fullName>
        <ecNumber evidence="1">2.5.1.19</ecNumber>
    </recommendedName>
    <alternativeName>
        <fullName evidence="1">5-enolpyruvylshikimate-3-phosphate synthase</fullName>
        <shortName evidence="1">EPSP synthase</shortName>
        <shortName evidence="1">EPSPS</shortName>
    </alternativeName>
</protein>
<evidence type="ECO:0000255" key="1">
    <source>
        <dbReference type="HAMAP-Rule" id="MF_00210"/>
    </source>
</evidence>
<evidence type="ECO:0000305" key="2"/>
<proteinExistence type="inferred from homology"/>
<feature type="chain" id="PRO_0000088295" description="3-phosphoshikimate 1-carboxyvinyltransferase">
    <location>
        <begin position="1"/>
        <end position="432"/>
    </location>
</feature>
<feature type="active site" description="Proton acceptor" evidence="1">
    <location>
        <position position="317"/>
    </location>
</feature>
<feature type="binding site" evidence="1">
    <location>
        <position position="23"/>
    </location>
    <ligand>
        <name>3-phosphoshikimate</name>
        <dbReference type="ChEBI" id="CHEBI:145989"/>
    </ligand>
</feature>
<feature type="binding site" evidence="1">
    <location>
        <position position="23"/>
    </location>
    <ligand>
        <name>phosphoenolpyruvate</name>
        <dbReference type="ChEBI" id="CHEBI:58702"/>
    </ligand>
</feature>
<feature type="binding site" evidence="1">
    <location>
        <position position="24"/>
    </location>
    <ligand>
        <name>3-phosphoshikimate</name>
        <dbReference type="ChEBI" id="CHEBI:145989"/>
    </ligand>
</feature>
<feature type="binding site" evidence="1">
    <location>
        <position position="28"/>
    </location>
    <ligand>
        <name>3-phosphoshikimate</name>
        <dbReference type="ChEBI" id="CHEBI:145989"/>
    </ligand>
</feature>
<feature type="binding site" evidence="1">
    <location>
        <position position="95"/>
    </location>
    <ligand>
        <name>phosphoenolpyruvate</name>
        <dbReference type="ChEBI" id="CHEBI:58702"/>
    </ligand>
</feature>
<feature type="binding site" evidence="1">
    <location>
        <position position="123"/>
    </location>
    <ligand>
        <name>phosphoenolpyruvate</name>
        <dbReference type="ChEBI" id="CHEBI:58702"/>
    </ligand>
</feature>
<feature type="binding site" evidence="1">
    <location>
        <position position="167"/>
    </location>
    <ligand>
        <name>3-phosphoshikimate</name>
        <dbReference type="ChEBI" id="CHEBI:145989"/>
    </ligand>
</feature>
<feature type="binding site" evidence="1">
    <location>
        <position position="169"/>
    </location>
    <ligand>
        <name>3-phosphoshikimate</name>
        <dbReference type="ChEBI" id="CHEBI:145989"/>
    </ligand>
</feature>
<feature type="binding site" evidence="1">
    <location>
        <position position="169"/>
    </location>
    <ligand>
        <name>phosphoenolpyruvate</name>
        <dbReference type="ChEBI" id="CHEBI:58702"/>
    </ligand>
</feature>
<feature type="binding site" evidence="1">
    <location>
        <position position="317"/>
    </location>
    <ligand>
        <name>3-phosphoshikimate</name>
        <dbReference type="ChEBI" id="CHEBI:145989"/>
    </ligand>
</feature>
<feature type="binding site" evidence="1">
    <location>
        <position position="344"/>
    </location>
    <ligand>
        <name>3-phosphoshikimate</name>
        <dbReference type="ChEBI" id="CHEBI:145989"/>
    </ligand>
</feature>
<feature type="binding site" evidence="1">
    <location>
        <position position="348"/>
    </location>
    <ligand>
        <name>phosphoenolpyruvate</name>
        <dbReference type="ChEBI" id="CHEBI:58702"/>
    </ligand>
</feature>
<feature type="binding site" evidence="1">
    <location>
        <position position="390"/>
    </location>
    <ligand>
        <name>phosphoenolpyruvate</name>
        <dbReference type="ChEBI" id="CHEBI:58702"/>
    </ligand>
</feature>
<feature type="sequence conflict" description="In Ref. 1; AAA71897." evidence="2" ref="1">
    <original>L</original>
    <variation>H</variation>
    <location>
        <position position="60"/>
    </location>
</feature>
<feature type="sequence conflict" description="In Ref. 1; AAA71897." evidence="2" ref="1">
    <original>SF</original>
    <variation>V</variation>
    <location>
        <begin position="81"/>
        <end position="82"/>
    </location>
</feature>
<feature type="sequence conflict" description="In Ref. 1; AAA71897." evidence="2" ref="1">
    <original>I</original>
    <variation>N</variation>
    <location>
        <position position="110"/>
    </location>
</feature>
<feature type="sequence conflict" description="In Ref. 1; AAA71897." evidence="2" ref="1">
    <original>P</original>
    <variation>Q</variation>
    <location>
        <position position="263"/>
    </location>
</feature>
<feature type="sequence conflict" description="In Ref. 1; AAA71897." evidence="2" ref="1">
    <original>VDS</original>
    <variation>DI</variation>
    <location>
        <begin position="383"/>
        <end position="385"/>
    </location>
</feature>
<feature type="sequence conflict" description="In Ref. 1; AAA71897." evidence="2" ref="1">
    <original>SL</original>
    <variation>CV</variation>
    <location>
        <begin position="399"/>
        <end position="400"/>
    </location>
</feature>
<feature type="sequence conflict" description="In Ref. 1; AAA71897." evidence="2" ref="1">
    <original>E</original>
    <variation>Q</variation>
    <location>
        <position position="429"/>
    </location>
</feature>
<name>AROA_STAA8</name>